<organism>
    <name type="scientific">Synechococcus sp. (strain ATCC 27144 / PCC 6301 / SAUG 1402/1)</name>
    <name type="common">Anacystis nidulans</name>
    <dbReference type="NCBI Taxonomy" id="269084"/>
    <lineage>
        <taxon>Bacteria</taxon>
        <taxon>Bacillati</taxon>
        <taxon>Cyanobacteriota</taxon>
        <taxon>Cyanophyceae</taxon>
        <taxon>Synechococcales</taxon>
        <taxon>Synechococcaceae</taxon>
        <taxon>Synechococcus</taxon>
    </lineage>
</organism>
<accession>Q5N2F8</accession>
<reference key="1">
    <citation type="journal article" date="2007" name="Photosyn. Res.">
        <title>Complete nucleotide sequence of the freshwater unicellular cyanobacterium Synechococcus elongatus PCC 6301 chromosome: gene content and organization.</title>
        <authorList>
            <person name="Sugita C."/>
            <person name="Ogata K."/>
            <person name="Shikata M."/>
            <person name="Jikuya H."/>
            <person name="Takano J."/>
            <person name="Furumichi M."/>
            <person name="Kanehisa M."/>
            <person name="Omata T."/>
            <person name="Sugiura M."/>
            <person name="Sugita M."/>
        </authorList>
    </citation>
    <scope>NUCLEOTIDE SEQUENCE [LARGE SCALE GENOMIC DNA]</scope>
    <source>
        <strain>ATCC 27144 / PCC 6301 / SAUG 1402/1</strain>
    </source>
</reference>
<keyword id="KW-0067">ATP-binding</keyword>
<keyword id="KW-0315">Glutamine amidotransferase</keyword>
<keyword id="KW-0332">GMP biosynthesis</keyword>
<keyword id="KW-0436">Ligase</keyword>
<keyword id="KW-0547">Nucleotide-binding</keyword>
<keyword id="KW-0658">Purine biosynthesis</keyword>
<name>GUAA_SYNP6</name>
<feature type="chain" id="PRO_0000229479" description="GMP synthase [glutamine-hydrolyzing]">
    <location>
        <begin position="1"/>
        <end position="534"/>
    </location>
</feature>
<feature type="domain" description="Glutamine amidotransferase type-1" evidence="1">
    <location>
        <begin position="20"/>
        <end position="210"/>
    </location>
</feature>
<feature type="domain" description="GMPS ATP-PPase" evidence="1">
    <location>
        <begin position="211"/>
        <end position="409"/>
    </location>
</feature>
<feature type="active site" description="Nucleophile" evidence="1">
    <location>
        <position position="97"/>
    </location>
</feature>
<feature type="active site" evidence="1">
    <location>
        <position position="184"/>
    </location>
</feature>
<feature type="active site" evidence="1">
    <location>
        <position position="186"/>
    </location>
</feature>
<feature type="binding site" evidence="1">
    <location>
        <begin position="238"/>
        <end position="244"/>
    </location>
    <ligand>
        <name>ATP</name>
        <dbReference type="ChEBI" id="CHEBI:30616"/>
    </ligand>
</feature>
<sequence length="534" mass="60530">MTLQTEMEAALEVAALNREMLIILDFGSQYSELIARRIRETQVYSEVLSYRTTADQIRQLSPKGIILSGGPNSVYDDYAPVCDPEIWNLGIPVLGVCYGMQLMVQQLGGQVDRAERGEYGKAALVIDDPTDLLTNVEPGSTMWMSHGDSVKTMPEGFELLAHTDNTPCAAIADHQRKFYGVQFHPEVVHSVHGMALIRNFVYHICDCEPTWTTETFVEEAIREIRARVGDKRVLLALSGGVDSSTLAFLLHRAIGDQLTCMFIDQGFMRKGEPERLMEVFNEKFKIHVEYIQARDRFLQRLEGITDPEEKRKRIGHEFIRVFEEESRRLGPFDYLAQGTLYPDVIESADTNVDPKTGERVAVKIKSHHNVGGLPKDLQFKLVEPLRRLFKDEVRQVGRSLGLPEEIVKRHPFPGPGLAIRILGEVTAEKLNILRDADLIVRQEVNRQGYYDEFWQAFAVLLPVKSVGVMGDKRTYAYPVVLRFVSSEDGMTADWSRAPYDLLETISNRIVNEVKGVNRVVYDITSKPPGTIEWE</sequence>
<dbReference type="EC" id="6.3.5.2" evidence="1"/>
<dbReference type="EMBL" id="AP008231">
    <property type="protein sequence ID" value="BAD79512.1"/>
    <property type="molecule type" value="Genomic_DNA"/>
</dbReference>
<dbReference type="SMR" id="Q5N2F8"/>
<dbReference type="MEROPS" id="C26.957"/>
<dbReference type="KEGG" id="syc:syc1322_d"/>
<dbReference type="eggNOG" id="COG0518">
    <property type="taxonomic scope" value="Bacteria"/>
</dbReference>
<dbReference type="eggNOG" id="COG0519">
    <property type="taxonomic scope" value="Bacteria"/>
</dbReference>
<dbReference type="UniPathway" id="UPA00189">
    <property type="reaction ID" value="UER00296"/>
</dbReference>
<dbReference type="Proteomes" id="UP000001175">
    <property type="component" value="Chromosome"/>
</dbReference>
<dbReference type="GO" id="GO:0005829">
    <property type="term" value="C:cytosol"/>
    <property type="evidence" value="ECO:0007669"/>
    <property type="project" value="TreeGrafter"/>
</dbReference>
<dbReference type="GO" id="GO:0005524">
    <property type="term" value="F:ATP binding"/>
    <property type="evidence" value="ECO:0007669"/>
    <property type="project" value="UniProtKB-UniRule"/>
</dbReference>
<dbReference type="GO" id="GO:0003921">
    <property type="term" value="F:GMP synthase activity"/>
    <property type="evidence" value="ECO:0007669"/>
    <property type="project" value="InterPro"/>
</dbReference>
<dbReference type="CDD" id="cd01742">
    <property type="entry name" value="GATase1_GMP_Synthase"/>
    <property type="match status" value="1"/>
</dbReference>
<dbReference type="CDD" id="cd01997">
    <property type="entry name" value="GMP_synthase_C"/>
    <property type="match status" value="1"/>
</dbReference>
<dbReference type="FunFam" id="3.30.300.10:FF:000002">
    <property type="entry name" value="GMP synthase [glutamine-hydrolyzing]"/>
    <property type="match status" value="1"/>
</dbReference>
<dbReference type="FunFam" id="3.40.50.620:FF:000001">
    <property type="entry name" value="GMP synthase [glutamine-hydrolyzing]"/>
    <property type="match status" value="1"/>
</dbReference>
<dbReference type="FunFam" id="3.40.50.880:FF:000001">
    <property type="entry name" value="GMP synthase [glutamine-hydrolyzing]"/>
    <property type="match status" value="1"/>
</dbReference>
<dbReference type="Gene3D" id="3.30.300.10">
    <property type="match status" value="1"/>
</dbReference>
<dbReference type="Gene3D" id="3.40.50.880">
    <property type="match status" value="1"/>
</dbReference>
<dbReference type="Gene3D" id="3.40.50.620">
    <property type="entry name" value="HUPs"/>
    <property type="match status" value="1"/>
</dbReference>
<dbReference type="HAMAP" id="MF_00344">
    <property type="entry name" value="GMP_synthase"/>
    <property type="match status" value="1"/>
</dbReference>
<dbReference type="InterPro" id="IPR029062">
    <property type="entry name" value="Class_I_gatase-like"/>
</dbReference>
<dbReference type="InterPro" id="IPR017926">
    <property type="entry name" value="GATASE"/>
</dbReference>
<dbReference type="InterPro" id="IPR001674">
    <property type="entry name" value="GMP_synth_C"/>
</dbReference>
<dbReference type="InterPro" id="IPR004739">
    <property type="entry name" value="GMP_synth_GATase"/>
</dbReference>
<dbReference type="InterPro" id="IPR022955">
    <property type="entry name" value="GMP_synthase"/>
</dbReference>
<dbReference type="InterPro" id="IPR025777">
    <property type="entry name" value="GMPS_ATP_PPase_dom"/>
</dbReference>
<dbReference type="InterPro" id="IPR014729">
    <property type="entry name" value="Rossmann-like_a/b/a_fold"/>
</dbReference>
<dbReference type="NCBIfam" id="TIGR00884">
    <property type="entry name" value="guaA_Cterm"/>
    <property type="match status" value="1"/>
</dbReference>
<dbReference type="NCBIfam" id="TIGR00888">
    <property type="entry name" value="guaA_Nterm"/>
    <property type="match status" value="1"/>
</dbReference>
<dbReference type="NCBIfam" id="NF000848">
    <property type="entry name" value="PRK00074.1"/>
    <property type="match status" value="1"/>
</dbReference>
<dbReference type="PANTHER" id="PTHR11922:SF2">
    <property type="entry name" value="GMP SYNTHASE [GLUTAMINE-HYDROLYZING]"/>
    <property type="match status" value="1"/>
</dbReference>
<dbReference type="PANTHER" id="PTHR11922">
    <property type="entry name" value="GMP SYNTHASE-RELATED"/>
    <property type="match status" value="1"/>
</dbReference>
<dbReference type="Pfam" id="PF00117">
    <property type="entry name" value="GATase"/>
    <property type="match status" value="1"/>
</dbReference>
<dbReference type="Pfam" id="PF00958">
    <property type="entry name" value="GMP_synt_C"/>
    <property type="match status" value="1"/>
</dbReference>
<dbReference type="PRINTS" id="PR00097">
    <property type="entry name" value="ANTSNTHASEII"/>
</dbReference>
<dbReference type="PRINTS" id="PR00099">
    <property type="entry name" value="CPSGATASE"/>
</dbReference>
<dbReference type="PRINTS" id="PR00096">
    <property type="entry name" value="GATASE"/>
</dbReference>
<dbReference type="SUPFAM" id="SSF52402">
    <property type="entry name" value="Adenine nucleotide alpha hydrolases-like"/>
    <property type="match status" value="1"/>
</dbReference>
<dbReference type="SUPFAM" id="SSF52317">
    <property type="entry name" value="Class I glutamine amidotransferase-like"/>
    <property type="match status" value="1"/>
</dbReference>
<dbReference type="SUPFAM" id="SSF54810">
    <property type="entry name" value="GMP synthetase C-terminal dimerisation domain"/>
    <property type="match status" value="1"/>
</dbReference>
<dbReference type="PROSITE" id="PS51273">
    <property type="entry name" value="GATASE_TYPE_1"/>
    <property type="match status" value="1"/>
</dbReference>
<dbReference type="PROSITE" id="PS51553">
    <property type="entry name" value="GMPS_ATP_PPASE"/>
    <property type="match status" value="1"/>
</dbReference>
<proteinExistence type="inferred from homology"/>
<evidence type="ECO:0000255" key="1">
    <source>
        <dbReference type="HAMAP-Rule" id="MF_00344"/>
    </source>
</evidence>
<protein>
    <recommendedName>
        <fullName evidence="1">GMP synthase [glutamine-hydrolyzing]</fullName>
        <ecNumber evidence="1">6.3.5.2</ecNumber>
    </recommendedName>
    <alternativeName>
        <fullName evidence="1">GMP synthetase</fullName>
    </alternativeName>
    <alternativeName>
        <fullName evidence="1">Glutamine amidotransferase</fullName>
    </alternativeName>
</protein>
<comment type="function">
    <text evidence="1">Catalyzes the synthesis of GMP from XMP.</text>
</comment>
<comment type="catalytic activity">
    <reaction evidence="1">
        <text>XMP + L-glutamine + ATP + H2O = GMP + L-glutamate + AMP + diphosphate + 2 H(+)</text>
        <dbReference type="Rhea" id="RHEA:11680"/>
        <dbReference type="ChEBI" id="CHEBI:15377"/>
        <dbReference type="ChEBI" id="CHEBI:15378"/>
        <dbReference type="ChEBI" id="CHEBI:29985"/>
        <dbReference type="ChEBI" id="CHEBI:30616"/>
        <dbReference type="ChEBI" id="CHEBI:33019"/>
        <dbReference type="ChEBI" id="CHEBI:57464"/>
        <dbReference type="ChEBI" id="CHEBI:58115"/>
        <dbReference type="ChEBI" id="CHEBI:58359"/>
        <dbReference type="ChEBI" id="CHEBI:456215"/>
        <dbReference type="EC" id="6.3.5.2"/>
    </reaction>
</comment>
<comment type="pathway">
    <text evidence="1">Purine metabolism; GMP biosynthesis; GMP from XMP (L-Gln route): step 1/1.</text>
</comment>
<comment type="subunit">
    <text evidence="1">Homodimer.</text>
</comment>
<gene>
    <name evidence="1" type="primary">guaA</name>
    <name type="ordered locus">syc1322_d</name>
</gene>